<reference key="1">
    <citation type="journal article" date="2006" name="Nature">
        <title>The DNA sequence, annotation and analysis of human chromosome 3.</title>
        <authorList>
            <person name="Muzny D.M."/>
            <person name="Scherer S.E."/>
            <person name="Kaul R."/>
            <person name="Wang J."/>
            <person name="Yu J."/>
            <person name="Sudbrak R."/>
            <person name="Buhay C.J."/>
            <person name="Chen R."/>
            <person name="Cree A."/>
            <person name="Ding Y."/>
            <person name="Dugan-Rocha S."/>
            <person name="Gill R."/>
            <person name="Gunaratne P."/>
            <person name="Harris R.A."/>
            <person name="Hawes A.C."/>
            <person name="Hernandez J."/>
            <person name="Hodgson A.V."/>
            <person name="Hume J."/>
            <person name="Jackson A."/>
            <person name="Khan Z.M."/>
            <person name="Kovar-Smith C."/>
            <person name="Lewis L.R."/>
            <person name="Lozado R.J."/>
            <person name="Metzker M.L."/>
            <person name="Milosavljevic A."/>
            <person name="Miner G.R."/>
            <person name="Morgan M.B."/>
            <person name="Nazareth L.V."/>
            <person name="Scott G."/>
            <person name="Sodergren E."/>
            <person name="Song X.-Z."/>
            <person name="Steffen D."/>
            <person name="Wei S."/>
            <person name="Wheeler D.A."/>
            <person name="Wright M.W."/>
            <person name="Worley K.C."/>
            <person name="Yuan Y."/>
            <person name="Zhang Z."/>
            <person name="Adams C.Q."/>
            <person name="Ansari-Lari M.A."/>
            <person name="Ayele M."/>
            <person name="Brown M.J."/>
            <person name="Chen G."/>
            <person name="Chen Z."/>
            <person name="Clendenning J."/>
            <person name="Clerc-Blankenburg K.P."/>
            <person name="Chen R."/>
            <person name="Chen Z."/>
            <person name="Davis C."/>
            <person name="Delgado O."/>
            <person name="Dinh H.H."/>
            <person name="Dong W."/>
            <person name="Draper H."/>
            <person name="Ernst S."/>
            <person name="Fu G."/>
            <person name="Gonzalez-Garay M.L."/>
            <person name="Garcia D.K."/>
            <person name="Gillett W."/>
            <person name="Gu J."/>
            <person name="Hao B."/>
            <person name="Haugen E."/>
            <person name="Havlak P."/>
            <person name="He X."/>
            <person name="Hennig S."/>
            <person name="Hu S."/>
            <person name="Huang W."/>
            <person name="Jackson L.R."/>
            <person name="Jacob L.S."/>
            <person name="Kelly S.H."/>
            <person name="Kube M."/>
            <person name="Levy R."/>
            <person name="Li Z."/>
            <person name="Liu B."/>
            <person name="Liu J."/>
            <person name="Liu W."/>
            <person name="Lu J."/>
            <person name="Maheshwari M."/>
            <person name="Nguyen B.-V."/>
            <person name="Okwuonu G.O."/>
            <person name="Palmeiri A."/>
            <person name="Pasternak S."/>
            <person name="Perez L.M."/>
            <person name="Phelps K.A."/>
            <person name="Plopper F.J."/>
            <person name="Qiang B."/>
            <person name="Raymond C."/>
            <person name="Rodriguez R."/>
            <person name="Saenphimmachak C."/>
            <person name="Santibanez J."/>
            <person name="Shen H."/>
            <person name="Shen Y."/>
            <person name="Subramanian S."/>
            <person name="Tabor P.E."/>
            <person name="Verduzco D."/>
            <person name="Waldron L."/>
            <person name="Wang J."/>
            <person name="Wang J."/>
            <person name="Wang Q."/>
            <person name="Williams G.A."/>
            <person name="Wong G.K.-S."/>
            <person name="Yao Z."/>
            <person name="Zhang J."/>
            <person name="Zhang X."/>
            <person name="Zhao G."/>
            <person name="Zhou J."/>
            <person name="Zhou Y."/>
            <person name="Nelson D."/>
            <person name="Lehrach H."/>
            <person name="Reinhardt R."/>
            <person name="Naylor S.L."/>
            <person name="Yang H."/>
            <person name="Olson M."/>
            <person name="Weinstock G."/>
            <person name="Gibbs R.A."/>
        </authorList>
    </citation>
    <scope>NUCLEOTIDE SEQUENCE [LARGE SCALE GENOMIC DNA]</scope>
</reference>
<reference key="2">
    <citation type="journal article" date="2004" name="Nat. Genet.">
        <title>Complete sequencing and characterization of 21,243 full-length human cDNAs.</title>
        <authorList>
            <person name="Ota T."/>
            <person name="Suzuki Y."/>
            <person name="Nishikawa T."/>
            <person name="Otsuki T."/>
            <person name="Sugiyama T."/>
            <person name="Irie R."/>
            <person name="Wakamatsu A."/>
            <person name="Hayashi K."/>
            <person name="Sato H."/>
            <person name="Nagai K."/>
            <person name="Kimura K."/>
            <person name="Makita H."/>
            <person name="Sekine M."/>
            <person name="Obayashi M."/>
            <person name="Nishi T."/>
            <person name="Shibahara T."/>
            <person name="Tanaka T."/>
            <person name="Ishii S."/>
            <person name="Yamamoto J."/>
            <person name="Saito K."/>
            <person name="Kawai Y."/>
            <person name="Isono Y."/>
            <person name="Nakamura Y."/>
            <person name="Nagahari K."/>
            <person name="Murakami K."/>
            <person name="Yasuda T."/>
            <person name="Iwayanagi T."/>
            <person name="Wagatsuma M."/>
            <person name="Shiratori A."/>
            <person name="Sudo H."/>
            <person name="Hosoiri T."/>
            <person name="Kaku Y."/>
            <person name="Kodaira H."/>
            <person name="Kondo H."/>
            <person name="Sugawara M."/>
            <person name="Takahashi M."/>
            <person name="Kanda K."/>
            <person name="Yokoi T."/>
            <person name="Furuya T."/>
            <person name="Kikkawa E."/>
            <person name="Omura Y."/>
            <person name="Abe K."/>
            <person name="Kamihara K."/>
            <person name="Katsuta N."/>
            <person name="Sato K."/>
            <person name="Tanikawa M."/>
            <person name="Yamazaki M."/>
            <person name="Ninomiya K."/>
            <person name="Ishibashi T."/>
            <person name="Yamashita H."/>
            <person name="Murakawa K."/>
            <person name="Fujimori K."/>
            <person name="Tanai H."/>
            <person name="Kimata M."/>
            <person name="Watanabe M."/>
            <person name="Hiraoka S."/>
            <person name="Chiba Y."/>
            <person name="Ishida S."/>
            <person name="Ono Y."/>
            <person name="Takiguchi S."/>
            <person name="Watanabe S."/>
            <person name="Yosida M."/>
            <person name="Hotuta T."/>
            <person name="Kusano J."/>
            <person name="Kanehori K."/>
            <person name="Takahashi-Fujii A."/>
            <person name="Hara H."/>
            <person name="Tanase T.-O."/>
            <person name="Nomura Y."/>
            <person name="Togiya S."/>
            <person name="Komai F."/>
            <person name="Hara R."/>
            <person name="Takeuchi K."/>
            <person name="Arita M."/>
            <person name="Imose N."/>
            <person name="Musashino K."/>
            <person name="Yuuki H."/>
            <person name="Oshima A."/>
            <person name="Sasaki N."/>
            <person name="Aotsuka S."/>
            <person name="Yoshikawa Y."/>
            <person name="Matsunawa H."/>
            <person name="Ichihara T."/>
            <person name="Shiohata N."/>
            <person name="Sano S."/>
            <person name="Moriya S."/>
            <person name="Momiyama H."/>
            <person name="Satoh N."/>
            <person name="Takami S."/>
            <person name="Terashima Y."/>
            <person name="Suzuki O."/>
            <person name="Nakagawa S."/>
            <person name="Senoh A."/>
            <person name="Mizoguchi H."/>
            <person name="Goto Y."/>
            <person name="Shimizu F."/>
            <person name="Wakebe H."/>
            <person name="Hishigaki H."/>
            <person name="Watanabe T."/>
            <person name="Sugiyama A."/>
            <person name="Takemoto M."/>
            <person name="Kawakami B."/>
            <person name="Yamazaki M."/>
            <person name="Watanabe K."/>
            <person name="Kumagai A."/>
            <person name="Itakura S."/>
            <person name="Fukuzumi Y."/>
            <person name="Fujimori Y."/>
            <person name="Komiyama M."/>
            <person name="Tashiro H."/>
            <person name="Tanigami A."/>
            <person name="Fujiwara T."/>
            <person name="Ono T."/>
            <person name="Yamada K."/>
            <person name="Fujii Y."/>
            <person name="Ozaki K."/>
            <person name="Hirao M."/>
            <person name="Ohmori Y."/>
            <person name="Kawabata A."/>
            <person name="Hikiji T."/>
            <person name="Kobatake N."/>
            <person name="Inagaki H."/>
            <person name="Ikema Y."/>
            <person name="Okamoto S."/>
            <person name="Okitani R."/>
            <person name="Kawakami T."/>
            <person name="Noguchi S."/>
            <person name="Itoh T."/>
            <person name="Shigeta K."/>
            <person name="Senba T."/>
            <person name="Matsumura K."/>
            <person name="Nakajima Y."/>
            <person name="Mizuno T."/>
            <person name="Morinaga M."/>
            <person name="Sasaki M."/>
            <person name="Togashi T."/>
            <person name="Oyama M."/>
            <person name="Hata H."/>
            <person name="Watanabe M."/>
            <person name="Komatsu T."/>
            <person name="Mizushima-Sugano J."/>
            <person name="Satoh T."/>
            <person name="Shirai Y."/>
            <person name="Takahashi Y."/>
            <person name="Nakagawa K."/>
            <person name="Okumura K."/>
            <person name="Nagase T."/>
            <person name="Nomura N."/>
            <person name="Kikuchi H."/>
            <person name="Masuho Y."/>
            <person name="Yamashita R."/>
            <person name="Nakai K."/>
            <person name="Yada T."/>
            <person name="Nakamura Y."/>
            <person name="Ohara O."/>
            <person name="Isogai T."/>
            <person name="Sugano S."/>
        </authorList>
    </citation>
    <scope>NUCLEOTIDE SEQUENCE [LARGE SCALE MRNA] OF 553-1128</scope>
    <source>
        <tissue>Placenta</tissue>
    </source>
</reference>
<reference key="3">
    <citation type="submission" date="2002-09" db="EMBL/GenBank/DDBJ databases">
        <title>Study of the immune profile in metastatic melanoma patients immunized with anti-idiotypic antibody by SEREX analysis.</title>
        <authorList>
            <person name="Bruno R."/>
            <person name="d'Orlando O."/>
            <person name="Altomonte A."/>
            <person name="Lamaj E."/>
            <person name="Maio M."/>
            <person name="Pucillo C."/>
        </authorList>
    </citation>
    <scope>NUCLEOTIDE SEQUENCE [MRNA] OF 482-1128</scope>
</reference>
<proteinExistence type="evidence at protein level"/>
<name>ZN654_HUMAN</name>
<sequence length="1128" mass="127876">MAEEESDQEAERLGEELVAIVESPLGPVGLRAAGDGRGGAGSGNCGGGVGISSRDYCRRFCQVVEDYAGRWQVPLPQLQVLQTALCCFTTASASFPDECEHVQYVLSSLAVSFFELLLFFGRDEFYEEPLKDILGSFQECQNHLRRYGNVNLELVTRIIRDGGPWEDPVLQAVLKAQPASQEIVNKYLSSENPLFFELRARYLIACERIPEAMALIKSCINHPEISKDLYFHQALFTCLFMSPVEDQLFREHLLKTDCKSGIDIICNAEKEGKTMLALQLCESFLIPQLQNGDMYCIWELIFIWSKLQLKSNPSKQVFVDQCYQLLRTATNVRVIFPFMKIIKDEVEEEGLQICVEICGCALQLDLHDDPKTKCLIYKTIAHFLPNDLEILRICALSIFFLERSLEAYRTVEELYKRPDEEYNEGTSSVQNRVRFELLPILKKGLFFDPEFWNFVMIKKNCVALLSDKSAVRFLNESTLENNAGNLKRTEEQQGLDEGFDSLTDQSTGETDPDDVSGVQPKGHINTKKNLTALSTSKVDHNVPRHRCMLCNKEFLGGHIVRHAQAHQKKGSFACVICGRKFRNRGLMQKHLKNHVKKIQRQQIAAAQQDDQEVTALEEINCSSSSISFENGNSDSKDLEVETLTASSEGNKEVIPEHVAEFIEIPISVPEDVIENVIENGSPNNSLNNVFKPLTECGDDYEEEEDEEGDYEEDDYDLNQETSVIHKINGTVCHPKDIYATDQEGNFKCPALGCVRIFKRIGFLNKHAMTVHPTDLNVRQTVMKWSKGKCKFCQRQFEDSQHFIDHLNRHSYPNVYFCLHFNCNESFKLPFQLAQHTKSHRIFQAQCSFPECHELFEDLPLLYEHEAQHYLSKTPESSAQPSETILWDVQTDSNPNQEKDSSSNEKQTISLPVSTSKSRKESTEPKTCIESMEKKTDSLVQNGNERSDDTVSNISLIDQKMPDIEPNSENNCSSSDIVNGHSEIEQTPLVSSDPALKIDTNRIRTENGSILPSVVPQEHNTLPVSQAPSKPNLTSEHTSYGLILTKPYVRPLPPSYLDERYLSMPKRRKFLTDRVDACSDQDNVYKKSVKRLRCGKCLTTYCNAEALEAHLAQKKCQTLFGFDSDDESA</sequence>
<evidence type="ECO:0000250" key="1"/>
<evidence type="ECO:0000250" key="2">
    <source>
        <dbReference type="UniProtKB" id="Q9DAU9"/>
    </source>
</evidence>
<evidence type="ECO:0000255" key="3">
    <source>
        <dbReference type="PROSITE-ProRule" id="PRU00042"/>
    </source>
</evidence>
<evidence type="ECO:0000256" key="4">
    <source>
        <dbReference type="SAM" id="MobiDB-lite"/>
    </source>
</evidence>
<evidence type="ECO:0000305" key="5"/>
<evidence type="ECO:0000312" key="6">
    <source>
        <dbReference type="HGNC" id="HGNC:25612"/>
    </source>
</evidence>
<feature type="chain" id="PRO_0000311946" description="Zinc finger protein 654">
    <location>
        <begin position="1"/>
        <end position="1128"/>
    </location>
</feature>
<feature type="zinc finger region" description="C2H2-type 1" evidence="3">
    <location>
        <begin position="572"/>
        <end position="594"/>
    </location>
</feature>
<feature type="zinc finger region" description="C2H2-type 2" evidence="3">
    <location>
        <begin position="746"/>
        <end position="771"/>
    </location>
</feature>
<feature type="zinc finger region" description="C2H2-type 3" evidence="3">
    <location>
        <begin position="787"/>
        <end position="809"/>
    </location>
</feature>
<feature type="zinc finger region" description="C2H2-type 4" evidence="3">
    <location>
        <begin position="815"/>
        <end position="839"/>
    </location>
</feature>
<feature type="zinc finger region" description="C2H2-type 5" evidence="3">
    <location>
        <begin position="844"/>
        <end position="868"/>
    </location>
</feature>
<feature type="region of interest" description="Disordered" evidence="4">
    <location>
        <begin position="498"/>
        <end position="523"/>
    </location>
</feature>
<feature type="region of interest" description="Disordered" evidence="4">
    <location>
        <begin position="891"/>
        <end position="951"/>
    </location>
</feature>
<feature type="compositionally biased region" description="Polar residues" evidence="4">
    <location>
        <begin position="903"/>
        <end position="915"/>
    </location>
</feature>
<feature type="compositionally biased region" description="Polar residues" evidence="4">
    <location>
        <begin position="937"/>
        <end position="951"/>
    </location>
</feature>
<feature type="modified residue" description="Phosphoserine" evidence="2">
    <location>
        <position position="1123"/>
    </location>
</feature>
<feature type="modified residue" description="Phosphoserine" evidence="2">
    <location>
        <position position="1127"/>
    </location>
</feature>
<feature type="sequence conflict" description="In Ref. 3; AAN40504." evidence="5" ref="3">
    <original>S</original>
    <variation>N</variation>
    <location>
        <position position="534"/>
    </location>
</feature>
<feature type="sequence conflict" description="In Ref. 2; BAA91946." evidence="5" ref="2">
    <original>H</original>
    <variation>Q</variation>
    <location>
        <position position="805"/>
    </location>
</feature>
<feature type="sequence conflict" description="In Ref. 2; BAA91946 and 3; AAN40504." evidence="5" ref="2 3">
    <original>I</original>
    <variation>T</variation>
    <location>
        <position position="841"/>
    </location>
</feature>
<feature type="sequence conflict" description="In Ref. 2; BAA91946." evidence="5" ref="2">
    <location>
        <begin position="886"/>
        <end position="1128"/>
    </location>
</feature>
<feature type="sequence conflict" description="In Ref. 2; BAA91946." evidence="5" ref="2">
    <original>K</original>
    <variation>R</variation>
    <location>
        <position position="925"/>
    </location>
</feature>
<feature type="sequence conflict" description="In Ref. 2; BAA91946." evidence="5" ref="2">
    <original>E</original>
    <variation>V</variation>
    <location>
        <position position="1035"/>
    </location>
</feature>
<feature type="sequence conflict" description="In Ref. 2; BAB15007." evidence="5" ref="2">
    <original>K</original>
    <variation>E</variation>
    <location>
        <position position="1095"/>
    </location>
</feature>
<protein>
    <recommendedName>
        <fullName evidence="5">Zinc finger protein 654</fullName>
    </recommendedName>
    <alternativeName>
        <fullName>Melanoma-associated antigen</fullName>
    </alternativeName>
</protein>
<keyword id="KW-0238">DNA-binding</keyword>
<keyword id="KW-0479">Metal-binding</keyword>
<keyword id="KW-0539">Nucleus</keyword>
<keyword id="KW-0597">Phosphoprotein</keyword>
<keyword id="KW-1267">Proteomics identification</keyword>
<keyword id="KW-1185">Reference proteome</keyword>
<keyword id="KW-0677">Repeat</keyword>
<keyword id="KW-0804">Transcription</keyword>
<keyword id="KW-0805">Transcription regulation</keyword>
<keyword id="KW-0862">Zinc</keyword>
<keyword id="KW-0863">Zinc-finger</keyword>
<accession>Q8IZM8</accession>
<accession>A0A1B0GWA0</accession>
<accession>Q9H791</accession>
<accession>Q9NV14</accession>
<comment type="function">
    <text evidence="1">May be involved in transcriptional regulation.</text>
</comment>
<comment type="subcellular location">
    <subcellularLocation>
        <location evidence="5">Nucleus</location>
    </subcellularLocation>
</comment>
<comment type="similarity">
    <text evidence="5">Belongs to the krueppel C2H2-type zinc-finger protein family.</text>
</comment>
<comment type="sequence caution" evidence="5">
    <conflict type="erroneous initiation">
        <sequence resource="EMBL-CDS" id="AAN40504"/>
    </conflict>
    <text>Extended N-terminus.</text>
</comment>
<comment type="sequence caution" evidence="5">
    <conflict type="erroneous initiation">
        <sequence resource="EMBL-CDS" id="BAA91946"/>
    </conflict>
    <text>Truncated N-terminus.</text>
</comment>
<comment type="sequence caution" evidence="5">
    <conflict type="erroneous termination">
        <sequence resource="EMBL-CDS" id="BAA91946"/>
    </conflict>
    <text>Truncated C-terminus.</text>
</comment>
<comment type="sequence caution" evidence="5">
    <conflict type="erroneous initiation">
        <sequence resource="EMBL-CDS" id="BAB15007"/>
    </conflict>
    <text>Truncated N-terminus.</text>
</comment>
<dbReference type="EMBL" id="AC119733">
    <property type="status" value="NOT_ANNOTATED_CDS"/>
    <property type="molecule type" value="Genomic_DNA"/>
</dbReference>
<dbReference type="EMBL" id="AC128650">
    <property type="status" value="NOT_ANNOTATED_CDS"/>
    <property type="molecule type" value="Genomic_DNA"/>
</dbReference>
<dbReference type="EMBL" id="AK001859">
    <property type="protein sequence ID" value="BAA91946.1"/>
    <property type="status" value="ALT_SEQ"/>
    <property type="molecule type" value="mRNA"/>
</dbReference>
<dbReference type="EMBL" id="AK024795">
    <property type="protein sequence ID" value="BAB15007.1"/>
    <property type="status" value="ALT_INIT"/>
    <property type="molecule type" value="mRNA"/>
</dbReference>
<dbReference type="EMBL" id="AF543494">
    <property type="protein sequence ID" value="AAN40504.1"/>
    <property type="status" value="ALT_INIT"/>
    <property type="molecule type" value="mRNA"/>
</dbReference>
<dbReference type="CCDS" id="CCDS87110.1"/>
<dbReference type="RefSeq" id="NP_001337063.1">
    <property type="nucleotide sequence ID" value="NM_001350134.2"/>
</dbReference>
<dbReference type="RefSeq" id="XP_016862279.1">
    <property type="nucleotide sequence ID" value="XM_017006790.1"/>
</dbReference>
<dbReference type="BioGRID" id="120567">
    <property type="interactions" value="2"/>
</dbReference>
<dbReference type="FunCoup" id="Q8IZM8">
    <property type="interactions" value="2193"/>
</dbReference>
<dbReference type="STRING" id="9606.ENSP00000490842"/>
<dbReference type="iPTMnet" id="Q8IZM8"/>
<dbReference type="PhosphoSitePlus" id="Q8IZM8"/>
<dbReference type="BioMuta" id="ZNF654"/>
<dbReference type="DMDM" id="296453064"/>
<dbReference type="jPOST" id="Q8IZM8"/>
<dbReference type="MassIVE" id="Q8IZM8"/>
<dbReference type="PaxDb" id="9606-ENSP00000312141"/>
<dbReference type="PeptideAtlas" id="Q8IZM8"/>
<dbReference type="ProteomicsDB" id="71374"/>
<dbReference type="Pumba" id="Q8IZM8"/>
<dbReference type="Antibodypedia" id="32053">
    <property type="antibodies" value="123 antibodies from 22 providers"/>
</dbReference>
<dbReference type="DNASU" id="55279"/>
<dbReference type="Ensembl" id="ENST00000636215.2">
    <property type="protein sequence ID" value="ENSP00000490842.1"/>
    <property type="gene ID" value="ENSG00000175105.8"/>
</dbReference>
<dbReference type="GeneID" id="55279"/>
<dbReference type="MANE-Select" id="ENST00000636215.2">
    <property type="protein sequence ID" value="ENSP00000490842.1"/>
    <property type="RefSeq nucleotide sequence ID" value="NM_001350134.2"/>
    <property type="RefSeq protein sequence ID" value="NP_001337063.1"/>
</dbReference>
<dbReference type="UCSC" id="uc003dqv.4">
    <property type="organism name" value="human"/>
</dbReference>
<dbReference type="AGR" id="HGNC:25612"/>
<dbReference type="GeneCards" id="ZNF654"/>
<dbReference type="HGNC" id="HGNC:25612">
    <property type="gene designation" value="ZNF654"/>
</dbReference>
<dbReference type="HPA" id="ENSG00000175105">
    <property type="expression patterns" value="Low tissue specificity"/>
</dbReference>
<dbReference type="neXtProt" id="NX_Q8IZM8"/>
<dbReference type="OpenTargets" id="ENSG00000175105"/>
<dbReference type="PharmGKB" id="PA134923001"/>
<dbReference type="VEuPathDB" id="HostDB:ENSG00000175105"/>
<dbReference type="eggNOG" id="KOG1721">
    <property type="taxonomic scope" value="Eukaryota"/>
</dbReference>
<dbReference type="GeneTree" id="ENSGT00950000183034"/>
<dbReference type="HOGENOM" id="CLU_026570_1_0_1"/>
<dbReference type="InParanoid" id="Q8IZM8"/>
<dbReference type="OMA" id="VDQCYHL"/>
<dbReference type="OrthoDB" id="9519785at2759"/>
<dbReference type="PAN-GO" id="Q8IZM8">
    <property type="GO annotations" value="4 GO annotations based on evolutionary models"/>
</dbReference>
<dbReference type="PhylomeDB" id="Q8IZM8"/>
<dbReference type="TreeFam" id="TF326007"/>
<dbReference type="PathwayCommons" id="Q8IZM8"/>
<dbReference type="BioGRID-ORCS" id="55279">
    <property type="hits" value="9 hits in 1155 CRISPR screens"/>
</dbReference>
<dbReference type="GenomeRNAi" id="55279"/>
<dbReference type="Pharos" id="Q8IZM8">
    <property type="development level" value="Tdark"/>
</dbReference>
<dbReference type="PRO" id="PR:Q8IZM8"/>
<dbReference type="Proteomes" id="UP000005640">
    <property type="component" value="Chromosome 3"/>
</dbReference>
<dbReference type="RNAct" id="Q8IZM8">
    <property type="molecule type" value="protein"/>
</dbReference>
<dbReference type="GO" id="GO:0005634">
    <property type="term" value="C:nucleus"/>
    <property type="evidence" value="ECO:0000318"/>
    <property type="project" value="GO_Central"/>
</dbReference>
<dbReference type="GO" id="GO:0003677">
    <property type="term" value="F:DNA binding"/>
    <property type="evidence" value="ECO:0000318"/>
    <property type="project" value="GO_Central"/>
</dbReference>
<dbReference type="GO" id="GO:0003700">
    <property type="term" value="F:DNA-binding transcription factor activity"/>
    <property type="evidence" value="ECO:0000303"/>
    <property type="project" value="ARUK-UCL"/>
</dbReference>
<dbReference type="GO" id="GO:0000981">
    <property type="term" value="F:DNA-binding transcription factor activity, RNA polymerase II-specific"/>
    <property type="evidence" value="ECO:0000318"/>
    <property type="project" value="GO_Central"/>
</dbReference>
<dbReference type="GO" id="GO:0008270">
    <property type="term" value="F:zinc ion binding"/>
    <property type="evidence" value="ECO:0007669"/>
    <property type="project" value="UniProtKB-KW"/>
</dbReference>
<dbReference type="GO" id="GO:0006357">
    <property type="term" value="P:regulation of transcription by RNA polymerase II"/>
    <property type="evidence" value="ECO:0000318"/>
    <property type="project" value="GO_Central"/>
</dbReference>
<dbReference type="Gene3D" id="3.30.160.60">
    <property type="entry name" value="Classic Zinc Finger"/>
    <property type="match status" value="2"/>
</dbReference>
<dbReference type="InterPro" id="IPR052251">
    <property type="entry name" value="GH-ZnFinger_Regulators"/>
</dbReference>
<dbReference type="InterPro" id="IPR036236">
    <property type="entry name" value="Znf_C2H2_sf"/>
</dbReference>
<dbReference type="InterPro" id="IPR013087">
    <property type="entry name" value="Znf_C2H2_type"/>
</dbReference>
<dbReference type="PANTHER" id="PTHR15507:SF16">
    <property type="entry name" value="ZINC FINGER PROTEIN 654"/>
    <property type="match status" value="1"/>
</dbReference>
<dbReference type="PANTHER" id="PTHR15507">
    <property type="entry name" value="ZINC FINGER PROTEIN RLF"/>
    <property type="match status" value="1"/>
</dbReference>
<dbReference type="Pfam" id="PF00096">
    <property type="entry name" value="zf-C2H2"/>
    <property type="match status" value="1"/>
</dbReference>
<dbReference type="Pfam" id="PF25420">
    <property type="entry name" value="zf-C2H2_ZN292"/>
    <property type="match status" value="1"/>
</dbReference>
<dbReference type="SMART" id="SM00355">
    <property type="entry name" value="ZnF_C2H2"/>
    <property type="match status" value="7"/>
</dbReference>
<dbReference type="SUPFAM" id="SSF57667">
    <property type="entry name" value="beta-beta-alpha zinc fingers"/>
    <property type="match status" value="1"/>
</dbReference>
<dbReference type="PROSITE" id="PS00028">
    <property type="entry name" value="ZINC_FINGER_C2H2_1"/>
    <property type="match status" value="5"/>
</dbReference>
<dbReference type="PROSITE" id="PS50157">
    <property type="entry name" value="ZINC_FINGER_C2H2_2"/>
    <property type="match status" value="2"/>
</dbReference>
<gene>
    <name evidence="6" type="primary">ZNF654</name>
</gene>
<organism>
    <name type="scientific">Homo sapiens</name>
    <name type="common">Human</name>
    <dbReference type="NCBI Taxonomy" id="9606"/>
    <lineage>
        <taxon>Eukaryota</taxon>
        <taxon>Metazoa</taxon>
        <taxon>Chordata</taxon>
        <taxon>Craniata</taxon>
        <taxon>Vertebrata</taxon>
        <taxon>Euteleostomi</taxon>
        <taxon>Mammalia</taxon>
        <taxon>Eutheria</taxon>
        <taxon>Euarchontoglires</taxon>
        <taxon>Primates</taxon>
        <taxon>Haplorrhini</taxon>
        <taxon>Catarrhini</taxon>
        <taxon>Hominidae</taxon>
        <taxon>Homo</taxon>
    </lineage>
</organism>